<accession>Q7NEH0</accession>
<gene>
    <name evidence="1" type="primary">rplO</name>
    <name type="synonym">rpl15</name>
    <name type="ordered locus">gll3909</name>
</gene>
<proteinExistence type="inferred from homology"/>
<comment type="function">
    <text evidence="1">Binds to the 23S rRNA.</text>
</comment>
<comment type="subunit">
    <text evidence="1">Part of the 50S ribosomal subunit.</text>
</comment>
<comment type="similarity">
    <text evidence="1">Belongs to the universal ribosomal protein uL15 family.</text>
</comment>
<keyword id="KW-1185">Reference proteome</keyword>
<keyword id="KW-0687">Ribonucleoprotein</keyword>
<keyword id="KW-0689">Ribosomal protein</keyword>
<keyword id="KW-0694">RNA-binding</keyword>
<keyword id="KW-0699">rRNA-binding</keyword>
<reference key="1">
    <citation type="journal article" date="2003" name="DNA Res.">
        <title>Complete genome structure of Gloeobacter violaceus PCC 7421, a cyanobacterium that lacks thylakoids.</title>
        <authorList>
            <person name="Nakamura Y."/>
            <person name="Kaneko T."/>
            <person name="Sato S."/>
            <person name="Mimuro M."/>
            <person name="Miyashita H."/>
            <person name="Tsuchiya T."/>
            <person name="Sasamoto S."/>
            <person name="Watanabe A."/>
            <person name="Kawashima K."/>
            <person name="Kishida Y."/>
            <person name="Kiyokawa C."/>
            <person name="Kohara M."/>
            <person name="Matsumoto M."/>
            <person name="Matsuno A."/>
            <person name="Nakazaki N."/>
            <person name="Shimpo S."/>
            <person name="Takeuchi C."/>
            <person name="Yamada M."/>
            <person name="Tabata S."/>
        </authorList>
    </citation>
    <scope>NUCLEOTIDE SEQUENCE [LARGE SCALE GENOMIC DNA]</scope>
    <source>
        <strain>ATCC 29082 / PCC 7421</strain>
    </source>
</reference>
<sequence>MKSLRLEDAVPQSGSRHRKLRVGRGHSAGQGKTSGRGMRGQKCRSGGGVRPGFEGGQIPLYMRLPKLKGFELVNPSSYTIVNLKQLRDLPADSEVNIETLLDAGILTATSGPLRVLGDGEAHVALQITAAYFTASAREKIEAAGGTCTVEA</sequence>
<protein>
    <recommendedName>
        <fullName evidence="1">Large ribosomal subunit protein uL15</fullName>
    </recommendedName>
    <alternativeName>
        <fullName evidence="3">50S ribosomal protein L15</fullName>
    </alternativeName>
</protein>
<name>RL15_GLOVI</name>
<evidence type="ECO:0000255" key="1">
    <source>
        <dbReference type="HAMAP-Rule" id="MF_01341"/>
    </source>
</evidence>
<evidence type="ECO:0000256" key="2">
    <source>
        <dbReference type="SAM" id="MobiDB-lite"/>
    </source>
</evidence>
<evidence type="ECO:0000305" key="3"/>
<organism>
    <name type="scientific">Gloeobacter violaceus (strain ATCC 29082 / PCC 7421)</name>
    <dbReference type="NCBI Taxonomy" id="251221"/>
    <lineage>
        <taxon>Bacteria</taxon>
        <taxon>Bacillati</taxon>
        <taxon>Cyanobacteriota</taxon>
        <taxon>Cyanophyceae</taxon>
        <taxon>Gloeobacterales</taxon>
        <taxon>Gloeobacteraceae</taxon>
        <taxon>Gloeobacter</taxon>
    </lineage>
</organism>
<feature type="chain" id="PRO_0000104728" description="Large ribosomal subunit protein uL15">
    <location>
        <begin position="1"/>
        <end position="151"/>
    </location>
</feature>
<feature type="region of interest" description="Disordered" evidence="2">
    <location>
        <begin position="1"/>
        <end position="51"/>
    </location>
</feature>
<feature type="compositionally biased region" description="Basic residues" evidence="2">
    <location>
        <begin position="15"/>
        <end position="24"/>
    </location>
</feature>
<feature type="compositionally biased region" description="Gly residues" evidence="2">
    <location>
        <begin position="26"/>
        <end position="38"/>
    </location>
</feature>
<dbReference type="EMBL" id="BA000045">
    <property type="protein sequence ID" value="BAC91850.1"/>
    <property type="molecule type" value="Genomic_DNA"/>
</dbReference>
<dbReference type="RefSeq" id="NP_926855.1">
    <property type="nucleotide sequence ID" value="NC_005125.1"/>
</dbReference>
<dbReference type="RefSeq" id="WP_011143897.1">
    <property type="nucleotide sequence ID" value="NC_005125.1"/>
</dbReference>
<dbReference type="SMR" id="Q7NEH0"/>
<dbReference type="FunCoup" id="Q7NEH0">
    <property type="interactions" value="280"/>
</dbReference>
<dbReference type="STRING" id="251221.gene:10761426"/>
<dbReference type="EnsemblBacteria" id="BAC91850">
    <property type="protein sequence ID" value="BAC91850"/>
    <property type="gene ID" value="BAC91850"/>
</dbReference>
<dbReference type="KEGG" id="gvi:gll3909"/>
<dbReference type="PATRIC" id="fig|251221.4.peg.3942"/>
<dbReference type="eggNOG" id="COG0200">
    <property type="taxonomic scope" value="Bacteria"/>
</dbReference>
<dbReference type="HOGENOM" id="CLU_055188_4_1_3"/>
<dbReference type="InParanoid" id="Q7NEH0"/>
<dbReference type="OrthoDB" id="9810293at2"/>
<dbReference type="PhylomeDB" id="Q7NEH0"/>
<dbReference type="Proteomes" id="UP000000557">
    <property type="component" value="Chromosome"/>
</dbReference>
<dbReference type="GO" id="GO:0022625">
    <property type="term" value="C:cytosolic large ribosomal subunit"/>
    <property type="evidence" value="ECO:0000318"/>
    <property type="project" value="GO_Central"/>
</dbReference>
<dbReference type="GO" id="GO:0019843">
    <property type="term" value="F:rRNA binding"/>
    <property type="evidence" value="ECO:0007669"/>
    <property type="project" value="UniProtKB-UniRule"/>
</dbReference>
<dbReference type="GO" id="GO:0003735">
    <property type="term" value="F:structural constituent of ribosome"/>
    <property type="evidence" value="ECO:0000318"/>
    <property type="project" value="GO_Central"/>
</dbReference>
<dbReference type="GO" id="GO:0006412">
    <property type="term" value="P:translation"/>
    <property type="evidence" value="ECO:0007669"/>
    <property type="project" value="UniProtKB-UniRule"/>
</dbReference>
<dbReference type="Gene3D" id="3.100.10.10">
    <property type="match status" value="1"/>
</dbReference>
<dbReference type="HAMAP" id="MF_01341">
    <property type="entry name" value="Ribosomal_uL15"/>
    <property type="match status" value="1"/>
</dbReference>
<dbReference type="InterPro" id="IPR030878">
    <property type="entry name" value="Ribosomal_uL15"/>
</dbReference>
<dbReference type="InterPro" id="IPR021131">
    <property type="entry name" value="Ribosomal_uL15/eL18"/>
</dbReference>
<dbReference type="InterPro" id="IPR036227">
    <property type="entry name" value="Ribosomal_uL15/eL18_sf"/>
</dbReference>
<dbReference type="InterPro" id="IPR005749">
    <property type="entry name" value="Ribosomal_uL15_bac-type"/>
</dbReference>
<dbReference type="InterPro" id="IPR001196">
    <property type="entry name" value="Ribosomal_uL15_CS"/>
</dbReference>
<dbReference type="NCBIfam" id="TIGR01071">
    <property type="entry name" value="rplO_bact"/>
    <property type="match status" value="1"/>
</dbReference>
<dbReference type="PANTHER" id="PTHR12934">
    <property type="entry name" value="50S RIBOSOMAL PROTEIN L15"/>
    <property type="match status" value="1"/>
</dbReference>
<dbReference type="PANTHER" id="PTHR12934:SF11">
    <property type="entry name" value="LARGE RIBOSOMAL SUBUNIT PROTEIN UL15M"/>
    <property type="match status" value="1"/>
</dbReference>
<dbReference type="Pfam" id="PF00828">
    <property type="entry name" value="Ribosomal_L27A"/>
    <property type="match status" value="1"/>
</dbReference>
<dbReference type="SUPFAM" id="SSF52080">
    <property type="entry name" value="Ribosomal proteins L15p and L18e"/>
    <property type="match status" value="1"/>
</dbReference>
<dbReference type="PROSITE" id="PS00475">
    <property type="entry name" value="RIBOSOMAL_L15"/>
    <property type="match status" value="1"/>
</dbReference>